<sequence length="367" mass="39761">SRFRPGWLARSSMVAATLTGADSYWVGDHLNGLVPRSIATPEYLGIAAKLVPSVDANYEPWTMLGNLAYGRPKRLRLGICVTDAGRRNPAVTAQAAATLQLLTRGNAILGIGVGEREGNEPYGVEWTRPVARFEEALATIRALWNSNGELVSRESAYFPLQNAAFELPPYRGKWPEIWVAAHGPRMLRATGRYADAWVPIVLVRPGDYSTALEAVRTAASDAGRDPMSIIPSAVRGVITGRDRDDVEEALDSVVVKMTALGVPGTAWARHGVEHPMGADFAGVQDVIPQTMDEQTVLSYTAKVPPALMKEVVFSGTPEEVVDQVAQWRDHGLEYLLVINGSLVNPSLRKAVAASLPHAKVLRGLKKL</sequence>
<reference key="1">
    <citation type="journal article" date="2005" name="J. Bacteriol.">
        <title>Identification of phthiodiolone ketoreductase, an enzyme required for production of mycobacterial diacyl phthiocerol virulence factors.</title>
        <authorList>
            <person name="Onwueme K.C."/>
            <person name="Vos C.J."/>
            <person name="Zurita J."/>
            <person name="Soll C.E."/>
            <person name="Quadri L.E.N."/>
        </authorList>
    </citation>
    <scope>NUCLEOTIDE SEQUENCE [GENOMIC DNA]</scope>
    <source>
        <strain>ATCC 12478 / DSM 44162 / CIP 104589 / JCM 6379 / NCTC 13024 / TMC 1204 / P-16</strain>
    </source>
</reference>
<dbReference type="EC" id="1.2.-.-"/>
<dbReference type="EMBL" id="AY906857">
    <property type="protein sequence ID" value="AAX98285.1"/>
    <property type="molecule type" value="Genomic_DNA"/>
</dbReference>
<dbReference type="SMR" id="Q4VHK1"/>
<dbReference type="STRING" id="1768.B1T50_23930"/>
<dbReference type="GO" id="GO:0016705">
    <property type="term" value="F:oxidoreductase activity, acting on paired donors, with incorporation or reduction of molecular oxygen"/>
    <property type="evidence" value="ECO:0007669"/>
    <property type="project" value="InterPro"/>
</dbReference>
<dbReference type="GO" id="GO:0006629">
    <property type="term" value="P:lipid metabolic process"/>
    <property type="evidence" value="ECO:0007669"/>
    <property type="project" value="UniProtKB-KW"/>
</dbReference>
<dbReference type="CDD" id="cd01097">
    <property type="entry name" value="Tetrahydromethanopterin_reductase"/>
    <property type="match status" value="1"/>
</dbReference>
<dbReference type="Gene3D" id="3.20.20.30">
    <property type="entry name" value="Luciferase-like domain"/>
    <property type="match status" value="1"/>
</dbReference>
<dbReference type="InterPro" id="IPR050564">
    <property type="entry name" value="F420-G6PD/mer"/>
</dbReference>
<dbReference type="InterPro" id="IPR011251">
    <property type="entry name" value="Luciferase-like_dom"/>
</dbReference>
<dbReference type="InterPro" id="IPR036661">
    <property type="entry name" value="Luciferase-like_sf"/>
</dbReference>
<dbReference type="PANTHER" id="PTHR43244">
    <property type="match status" value="1"/>
</dbReference>
<dbReference type="PANTHER" id="PTHR43244:SF1">
    <property type="entry name" value="5,10-METHYLENETETRAHYDROMETHANOPTERIN REDUCTASE"/>
    <property type="match status" value="1"/>
</dbReference>
<dbReference type="Pfam" id="PF00296">
    <property type="entry name" value="Bac_luciferase"/>
    <property type="match status" value="1"/>
</dbReference>
<dbReference type="SUPFAM" id="SSF51679">
    <property type="entry name" value="Bacterial luciferase-like"/>
    <property type="match status" value="1"/>
</dbReference>
<keyword id="KW-0444">Lipid biosynthesis</keyword>
<keyword id="KW-0443">Lipid metabolism</keyword>
<keyword id="KW-0560">Oxidoreductase</keyword>
<accession>Q4VHK1</accession>
<proteinExistence type="inferred from homology"/>
<feature type="chain" id="PRO_0000309349" description="Phthiodiolone/phenolphthiodiolone dimycocerosates ketoreductase">
    <location>
        <begin position="1" status="less than"/>
        <end position="367"/>
    </location>
</feature>
<feature type="non-terminal residue">
    <location>
        <position position="1"/>
    </location>
</feature>
<name>PHKR_MYCKA</name>
<evidence type="ECO:0000250" key="1"/>
<evidence type="ECO:0000305" key="2"/>
<protein>
    <recommendedName>
        <fullName>Phthiodiolone/phenolphthiodiolone dimycocerosates ketoreductase</fullName>
        <ecNumber>1.2.-.-</ecNumber>
    </recommendedName>
</protein>
<organism>
    <name type="scientific">Mycobacterium kansasii</name>
    <dbReference type="NCBI Taxonomy" id="1768"/>
    <lineage>
        <taxon>Bacteria</taxon>
        <taxon>Bacillati</taxon>
        <taxon>Actinomycetota</taxon>
        <taxon>Actinomycetes</taxon>
        <taxon>Mycobacteriales</taxon>
        <taxon>Mycobacteriaceae</taxon>
        <taxon>Mycobacterium</taxon>
    </lineage>
</organism>
<comment type="function">
    <text evidence="1">Catalyzes the reduction of the keto moiety of phthiodiolone dimycocerosates (DIM B) and glycosylated phenolphthiodiolone dimycocerosates to form the intermediate compounds phthiotriol and glycosylated phenolphthiotriol dimycocerosates during phthiocerol dimycocerosates (DIM A) and glycosylated phenolphthiocerol dimycocerosates (PGL) biosynthesis.</text>
</comment>
<comment type="similarity">
    <text evidence="2">Belongs to the mer family. Phthiodiolone/phenolphthiodiolone dimycocerosates ketoreductase subfamily.</text>
</comment>
<comment type="caution">
    <text evidence="2">According to PubMed:15995190, this enzyme is not functional in M.kansasii, due to mutations outside this fragment, possibly in the ribosome-binding site or promoter/regulatory regions.</text>
</comment>